<comment type="function">
    <text evidence="1">Catalyzes the reversible conversion of ribose-5-phosphate to ribulose 5-phosphate.</text>
</comment>
<comment type="catalytic activity">
    <reaction evidence="1">
        <text>aldehydo-D-ribose 5-phosphate = D-ribulose 5-phosphate</text>
        <dbReference type="Rhea" id="RHEA:14657"/>
        <dbReference type="ChEBI" id="CHEBI:58121"/>
        <dbReference type="ChEBI" id="CHEBI:58273"/>
        <dbReference type="EC" id="5.3.1.6"/>
    </reaction>
</comment>
<comment type="pathway">
    <text evidence="1">Carbohydrate degradation; pentose phosphate pathway; D-ribose 5-phosphate from D-ribulose 5-phosphate (non-oxidative stage): step 1/1.</text>
</comment>
<comment type="subunit">
    <text evidence="1">Homodimer.</text>
</comment>
<comment type="similarity">
    <text evidence="1">Belongs to the ribose 5-phosphate isomerase family.</text>
</comment>
<accession>Q0T0Y5</accession>
<feature type="chain" id="PRO_1000016999" description="Ribose-5-phosphate isomerase A">
    <location>
        <begin position="1"/>
        <end position="219"/>
    </location>
</feature>
<feature type="active site" description="Proton acceptor" evidence="1">
    <location>
        <position position="103"/>
    </location>
</feature>
<feature type="binding site" evidence="1">
    <location>
        <begin position="28"/>
        <end position="31"/>
    </location>
    <ligand>
        <name>substrate</name>
    </ligand>
</feature>
<feature type="binding site" evidence="1">
    <location>
        <begin position="81"/>
        <end position="84"/>
    </location>
    <ligand>
        <name>substrate</name>
    </ligand>
</feature>
<feature type="binding site" evidence="1">
    <location>
        <begin position="94"/>
        <end position="97"/>
    </location>
    <ligand>
        <name>substrate</name>
    </ligand>
</feature>
<feature type="binding site" evidence="1">
    <location>
        <position position="121"/>
    </location>
    <ligand>
        <name>substrate</name>
    </ligand>
</feature>
<name>RPIA_SHIF8</name>
<keyword id="KW-0413">Isomerase</keyword>
<dbReference type="EC" id="5.3.1.6" evidence="1"/>
<dbReference type="EMBL" id="CP000266">
    <property type="protein sequence ID" value="ABF05030.1"/>
    <property type="molecule type" value="Genomic_DNA"/>
</dbReference>
<dbReference type="RefSeq" id="WP_000189743.1">
    <property type="nucleotide sequence ID" value="NC_008258.1"/>
</dbReference>
<dbReference type="SMR" id="Q0T0Y5"/>
<dbReference type="GeneID" id="93779085"/>
<dbReference type="KEGG" id="sfv:SFV_2961"/>
<dbReference type="HOGENOM" id="CLU_056590_1_1_6"/>
<dbReference type="UniPathway" id="UPA00115">
    <property type="reaction ID" value="UER00412"/>
</dbReference>
<dbReference type="Proteomes" id="UP000000659">
    <property type="component" value="Chromosome"/>
</dbReference>
<dbReference type="GO" id="GO:0005829">
    <property type="term" value="C:cytosol"/>
    <property type="evidence" value="ECO:0007669"/>
    <property type="project" value="TreeGrafter"/>
</dbReference>
<dbReference type="GO" id="GO:0004751">
    <property type="term" value="F:ribose-5-phosphate isomerase activity"/>
    <property type="evidence" value="ECO:0007669"/>
    <property type="project" value="UniProtKB-UniRule"/>
</dbReference>
<dbReference type="GO" id="GO:0006014">
    <property type="term" value="P:D-ribose metabolic process"/>
    <property type="evidence" value="ECO:0007669"/>
    <property type="project" value="TreeGrafter"/>
</dbReference>
<dbReference type="GO" id="GO:0009052">
    <property type="term" value="P:pentose-phosphate shunt, non-oxidative branch"/>
    <property type="evidence" value="ECO:0007669"/>
    <property type="project" value="UniProtKB-UniRule"/>
</dbReference>
<dbReference type="CDD" id="cd01398">
    <property type="entry name" value="RPI_A"/>
    <property type="match status" value="1"/>
</dbReference>
<dbReference type="FunFam" id="3.30.70.260:FF:000004">
    <property type="entry name" value="Ribose-5-phosphate isomerase A"/>
    <property type="match status" value="1"/>
</dbReference>
<dbReference type="FunFam" id="3.40.50.1360:FF:000001">
    <property type="entry name" value="Ribose-5-phosphate isomerase A"/>
    <property type="match status" value="1"/>
</dbReference>
<dbReference type="Gene3D" id="3.30.70.260">
    <property type="match status" value="1"/>
</dbReference>
<dbReference type="Gene3D" id="3.40.50.1360">
    <property type="match status" value="1"/>
</dbReference>
<dbReference type="HAMAP" id="MF_00170">
    <property type="entry name" value="Rib_5P_isom_A"/>
    <property type="match status" value="1"/>
</dbReference>
<dbReference type="InterPro" id="IPR037171">
    <property type="entry name" value="NagB/RpiA_transferase-like"/>
</dbReference>
<dbReference type="InterPro" id="IPR020672">
    <property type="entry name" value="Ribose5P_isomerase_typA_subgr"/>
</dbReference>
<dbReference type="InterPro" id="IPR004788">
    <property type="entry name" value="Ribose5P_isomerase_type_A"/>
</dbReference>
<dbReference type="NCBIfam" id="NF001924">
    <property type="entry name" value="PRK00702.1"/>
    <property type="match status" value="1"/>
</dbReference>
<dbReference type="NCBIfam" id="TIGR00021">
    <property type="entry name" value="rpiA"/>
    <property type="match status" value="1"/>
</dbReference>
<dbReference type="PANTHER" id="PTHR11934">
    <property type="entry name" value="RIBOSE-5-PHOSPHATE ISOMERASE"/>
    <property type="match status" value="1"/>
</dbReference>
<dbReference type="PANTHER" id="PTHR11934:SF0">
    <property type="entry name" value="RIBOSE-5-PHOSPHATE ISOMERASE"/>
    <property type="match status" value="1"/>
</dbReference>
<dbReference type="Pfam" id="PF06026">
    <property type="entry name" value="Rib_5-P_isom_A"/>
    <property type="match status" value="1"/>
</dbReference>
<dbReference type="SUPFAM" id="SSF75445">
    <property type="entry name" value="D-ribose-5-phosphate isomerase (RpiA), lid domain"/>
    <property type="match status" value="1"/>
</dbReference>
<dbReference type="SUPFAM" id="SSF100950">
    <property type="entry name" value="NagB/RpiA/CoA transferase-like"/>
    <property type="match status" value="1"/>
</dbReference>
<organism>
    <name type="scientific">Shigella flexneri serotype 5b (strain 8401)</name>
    <dbReference type="NCBI Taxonomy" id="373384"/>
    <lineage>
        <taxon>Bacteria</taxon>
        <taxon>Pseudomonadati</taxon>
        <taxon>Pseudomonadota</taxon>
        <taxon>Gammaproteobacteria</taxon>
        <taxon>Enterobacterales</taxon>
        <taxon>Enterobacteriaceae</taxon>
        <taxon>Shigella</taxon>
    </lineage>
</organism>
<sequence length="219" mass="22860">MTQDELKKAVGWAALQYVQPGTIVGVGTGSTAAHFIDALGTMKGQIEGAVSSSDASTEKLKSLGIHVFDLNEVDSLGIYVDGADEINGHMQMIKGGGAALTREKIIASVAEKFICIADASKQVDILGKFPLPVEVIPMARSAVARQLVKLGGRPEYRQGVVTDNGNVILDVHGMEILDPIAMENAINAIPGVVTVGLFANRGADVALIGTPDGVKTIVK</sequence>
<evidence type="ECO:0000255" key="1">
    <source>
        <dbReference type="HAMAP-Rule" id="MF_00170"/>
    </source>
</evidence>
<gene>
    <name evidence="1" type="primary">rpiA</name>
    <name type="ordered locus">SFV_2961</name>
</gene>
<reference key="1">
    <citation type="journal article" date="2006" name="BMC Genomics">
        <title>Complete genome sequence of Shigella flexneri 5b and comparison with Shigella flexneri 2a.</title>
        <authorList>
            <person name="Nie H."/>
            <person name="Yang F."/>
            <person name="Zhang X."/>
            <person name="Yang J."/>
            <person name="Chen L."/>
            <person name="Wang J."/>
            <person name="Xiong Z."/>
            <person name="Peng J."/>
            <person name="Sun L."/>
            <person name="Dong J."/>
            <person name="Xue Y."/>
            <person name="Xu X."/>
            <person name="Chen S."/>
            <person name="Yao Z."/>
            <person name="Shen Y."/>
            <person name="Jin Q."/>
        </authorList>
    </citation>
    <scope>NUCLEOTIDE SEQUENCE [LARGE SCALE GENOMIC DNA]</scope>
    <source>
        <strain>8401</strain>
    </source>
</reference>
<proteinExistence type="inferred from homology"/>
<protein>
    <recommendedName>
        <fullName evidence="1">Ribose-5-phosphate isomerase A</fullName>
        <ecNumber evidence="1">5.3.1.6</ecNumber>
    </recommendedName>
    <alternativeName>
        <fullName evidence="1">Phosphoriboisomerase A</fullName>
        <shortName evidence="1">PRI</shortName>
    </alternativeName>
</protein>